<organism evidence="9">
    <name type="scientific">Caenorhabditis elegans</name>
    <dbReference type="NCBI Taxonomy" id="6239"/>
    <lineage>
        <taxon>Eukaryota</taxon>
        <taxon>Metazoa</taxon>
        <taxon>Ecdysozoa</taxon>
        <taxon>Nematoda</taxon>
        <taxon>Chromadorea</taxon>
        <taxon>Rhabditida</taxon>
        <taxon>Rhabditina</taxon>
        <taxon>Rhabditomorpha</taxon>
        <taxon>Rhabditoidea</taxon>
        <taxon>Rhabditidae</taxon>
        <taxon>Peloderinae</taxon>
        <taxon>Caenorhabditis</taxon>
    </lineage>
</organism>
<comment type="function">
    <text evidence="1 6">Guanylate cyclase involved in the production of the second messenger cGMP (By similarity). Regulates thermotaxis responses in AFD sensory neurons. May regulate AFD neuronal activity such as calcium responses to temperature gradients (PubMed:16415369).</text>
</comment>
<comment type="catalytic activity">
    <reaction evidence="1">
        <text>GTP = 3',5'-cyclic GMP + diphosphate</text>
        <dbReference type="Rhea" id="RHEA:13665"/>
        <dbReference type="ChEBI" id="CHEBI:33019"/>
        <dbReference type="ChEBI" id="CHEBI:37565"/>
        <dbReference type="ChEBI" id="CHEBI:57746"/>
        <dbReference type="EC" id="4.6.1.2"/>
    </reaction>
</comment>
<comment type="subcellular location">
    <subcellularLocation>
        <location evidence="7">Cell membrane</location>
        <topology evidence="7">Single-pass type I membrane protein</topology>
    </subcellularLocation>
    <subcellularLocation>
        <location evidence="6">Cell projection</location>
        <location evidence="6">Cilium</location>
    </subcellularLocation>
    <text evidence="6">Localizes exclusively to the sensory ending, known as cilium, in AFD neurons.</text>
</comment>
<comment type="tissue specificity">
    <text evidence="6">Expressed specifically in AFD sensory neurons.</text>
</comment>
<comment type="domain">
    <text evidence="4">The protein kinase domain is predicted to be catalytically inactive.</text>
</comment>
<comment type="similarity">
    <text evidence="3">Belongs to the adenylyl cyclase class-4/guanylyl cyclase family.</text>
</comment>
<feature type="signal peptide" evidence="2">
    <location>
        <begin position="1"/>
        <end position="15"/>
    </location>
</feature>
<feature type="chain" id="PRO_0000433292" description="Receptor-type guanylate cyclase gcy-23" evidence="2">
    <location>
        <begin position="16"/>
        <end position="1073"/>
    </location>
</feature>
<feature type="topological domain" description="Extracellular" evidence="2">
    <location>
        <begin position="16"/>
        <end position="458"/>
    </location>
</feature>
<feature type="transmembrane region" description="Helical" evidence="2">
    <location>
        <begin position="459"/>
        <end position="479"/>
    </location>
</feature>
<feature type="topological domain" description="Cytoplasmic" evidence="2">
    <location>
        <begin position="480"/>
        <end position="1073"/>
    </location>
</feature>
<feature type="domain" description="Protein kinase" evidence="4">
    <location>
        <begin position="508"/>
        <end position="808"/>
    </location>
</feature>
<feature type="domain" description="Guanylate cyclase" evidence="3">
    <location>
        <begin position="878"/>
        <end position="1008"/>
    </location>
</feature>
<feature type="coiled-coil region" evidence="2">
    <location>
        <begin position="813"/>
        <end position="844"/>
    </location>
</feature>
<feature type="binding site" evidence="3">
    <location>
        <position position="883"/>
    </location>
    <ligand>
        <name>Mg(2+)</name>
        <dbReference type="ChEBI" id="CHEBI:18420"/>
        <label>1</label>
    </ligand>
</feature>
<feature type="binding site" evidence="3">
    <location>
        <position position="883"/>
    </location>
    <ligand>
        <name>Mg(2+)</name>
        <dbReference type="ChEBI" id="CHEBI:18420"/>
        <label>2</label>
    </ligand>
</feature>
<feature type="binding site" evidence="3">
    <location>
        <position position="884"/>
    </location>
    <ligand>
        <name>Mg(2+)</name>
        <dbReference type="ChEBI" id="CHEBI:18420"/>
        <label>2</label>
    </ligand>
</feature>
<feature type="binding site" evidence="3">
    <location>
        <position position="927"/>
    </location>
    <ligand>
        <name>Mg(2+)</name>
        <dbReference type="ChEBI" id="CHEBI:18420"/>
        <label>1</label>
    </ligand>
</feature>
<feature type="binding site" evidence="3">
    <location>
        <position position="927"/>
    </location>
    <ligand>
        <name>Mg(2+)</name>
        <dbReference type="ChEBI" id="CHEBI:18420"/>
        <label>2</label>
    </ligand>
</feature>
<feature type="glycosylation site" description="N-linked (GlcNAc...) asparagine" evidence="5">
    <location>
        <position position="336"/>
    </location>
</feature>
<evidence type="ECO:0000250" key="1">
    <source>
        <dbReference type="UniProtKB" id="Q19187"/>
    </source>
</evidence>
<evidence type="ECO:0000255" key="2"/>
<evidence type="ECO:0000255" key="3">
    <source>
        <dbReference type="PROSITE-ProRule" id="PRU00099"/>
    </source>
</evidence>
<evidence type="ECO:0000255" key="4">
    <source>
        <dbReference type="PROSITE-ProRule" id="PRU00159"/>
    </source>
</evidence>
<evidence type="ECO:0000255" key="5">
    <source>
        <dbReference type="PROSITE-ProRule" id="PRU00498"/>
    </source>
</evidence>
<evidence type="ECO:0000269" key="6">
    <source>
    </source>
</evidence>
<evidence type="ECO:0000305" key="7"/>
<evidence type="ECO:0000312" key="8">
    <source>
        <dbReference type="EMBL" id="BAE78830.1"/>
    </source>
</evidence>
<evidence type="ECO:0000312" key="9">
    <source>
        <dbReference type="Proteomes" id="UP000001940"/>
    </source>
</evidence>
<evidence type="ECO:0000312" key="10">
    <source>
        <dbReference type="WormBase" id="T26C12.4"/>
    </source>
</evidence>
<accession>G5EEE9</accession>
<dbReference type="EC" id="4.6.1.2" evidence="1"/>
<dbReference type="EMBL" id="AB201390">
    <property type="protein sequence ID" value="BAE78830.1"/>
    <property type="molecule type" value="mRNA"/>
</dbReference>
<dbReference type="EMBL" id="FO081749">
    <property type="protein sequence ID" value="CCD74008.1"/>
    <property type="molecule type" value="Genomic_DNA"/>
</dbReference>
<dbReference type="RefSeq" id="NP_500309.3">
    <property type="nucleotide sequence ID" value="NM_067908.5"/>
</dbReference>
<dbReference type="SMR" id="G5EEE9"/>
<dbReference type="FunCoup" id="G5EEE9">
    <property type="interactions" value="73"/>
</dbReference>
<dbReference type="STRING" id="6239.T26C12.4.1"/>
<dbReference type="GlyCosmos" id="G5EEE9">
    <property type="glycosylation" value="1 site, No reported glycans"/>
</dbReference>
<dbReference type="PaxDb" id="6239-T26C12.4"/>
<dbReference type="EnsemblMetazoa" id="T26C12.4.1">
    <property type="protein sequence ID" value="T26C12.4.1"/>
    <property type="gene ID" value="WBGene00001548"/>
</dbReference>
<dbReference type="GeneID" id="191652"/>
<dbReference type="KEGG" id="cel:CELE_T26C12.4"/>
<dbReference type="AGR" id="WB:WBGene00001548"/>
<dbReference type="CTD" id="191652"/>
<dbReference type="WormBase" id="T26C12.4">
    <property type="protein sequence ID" value="CE41702"/>
    <property type="gene ID" value="WBGene00001548"/>
    <property type="gene designation" value="gcy-23"/>
</dbReference>
<dbReference type="eggNOG" id="KOG1023">
    <property type="taxonomic scope" value="Eukaryota"/>
</dbReference>
<dbReference type="HOGENOM" id="CLU_001072_1_3_1"/>
<dbReference type="InParanoid" id="G5EEE9"/>
<dbReference type="OMA" id="IGMAFNE"/>
<dbReference type="OrthoDB" id="1890790at2759"/>
<dbReference type="PhylomeDB" id="G5EEE9"/>
<dbReference type="Reactome" id="R-CEL-2514859">
    <property type="pathway name" value="Inactivation, recovery and regulation of the phototransduction cascade"/>
</dbReference>
<dbReference type="PRO" id="PR:G5EEE9"/>
<dbReference type="Proteomes" id="UP000001940">
    <property type="component" value="Chromosome IV"/>
</dbReference>
<dbReference type="Bgee" id="WBGene00001548">
    <property type="expression patterns" value="Expressed in anatomical system and 4 other cell types or tissues"/>
</dbReference>
<dbReference type="GO" id="GO:0005929">
    <property type="term" value="C:cilium"/>
    <property type="evidence" value="ECO:0007669"/>
    <property type="project" value="UniProtKB-SubCell"/>
</dbReference>
<dbReference type="GO" id="GO:0044306">
    <property type="term" value="C:neuron projection terminus"/>
    <property type="evidence" value="ECO:0000314"/>
    <property type="project" value="WormBase"/>
</dbReference>
<dbReference type="GO" id="GO:0005886">
    <property type="term" value="C:plasma membrane"/>
    <property type="evidence" value="ECO:0000318"/>
    <property type="project" value="GO_Central"/>
</dbReference>
<dbReference type="GO" id="GO:0005524">
    <property type="term" value="F:ATP binding"/>
    <property type="evidence" value="ECO:0007669"/>
    <property type="project" value="InterPro"/>
</dbReference>
<dbReference type="GO" id="GO:0005525">
    <property type="term" value="F:GTP binding"/>
    <property type="evidence" value="ECO:0007669"/>
    <property type="project" value="UniProtKB-KW"/>
</dbReference>
<dbReference type="GO" id="GO:0004383">
    <property type="term" value="F:guanylate cyclase activity"/>
    <property type="evidence" value="ECO:0000250"/>
    <property type="project" value="WormBase"/>
</dbReference>
<dbReference type="GO" id="GO:0046872">
    <property type="term" value="F:metal ion binding"/>
    <property type="evidence" value="ECO:0007669"/>
    <property type="project" value="UniProtKB-KW"/>
</dbReference>
<dbReference type="GO" id="GO:0001653">
    <property type="term" value="F:peptide receptor activity"/>
    <property type="evidence" value="ECO:0000318"/>
    <property type="project" value="GO_Central"/>
</dbReference>
<dbReference type="GO" id="GO:0004672">
    <property type="term" value="F:protein kinase activity"/>
    <property type="evidence" value="ECO:0007669"/>
    <property type="project" value="InterPro"/>
</dbReference>
<dbReference type="GO" id="GO:0006182">
    <property type="term" value="P:cGMP biosynthetic process"/>
    <property type="evidence" value="ECO:0000318"/>
    <property type="project" value="GO_Central"/>
</dbReference>
<dbReference type="GO" id="GO:0016048">
    <property type="term" value="P:detection of temperature stimulus"/>
    <property type="evidence" value="ECO:0000315"/>
    <property type="project" value="UniProtKB"/>
</dbReference>
<dbReference type="GO" id="GO:0035556">
    <property type="term" value="P:intracellular signal transduction"/>
    <property type="evidence" value="ECO:0007669"/>
    <property type="project" value="InterPro"/>
</dbReference>
<dbReference type="GO" id="GO:0007168">
    <property type="term" value="P:receptor guanylyl cyclase signaling pathway"/>
    <property type="evidence" value="ECO:0000250"/>
    <property type="project" value="WormBase"/>
</dbReference>
<dbReference type="GO" id="GO:0040040">
    <property type="term" value="P:thermosensory behavior"/>
    <property type="evidence" value="ECO:0000315"/>
    <property type="project" value="UniProtKB"/>
</dbReference>
<dbReference type="GO" id="GO:0043052">
    <property type="term" value="P:thermotaxis"/>
    <property type="evidence" value="ECO:0000315"/>
    <property type="project" value="UniProtKB"/>
</dbReference>
<dbReference type="CDD" id="cd07302">
    <property type="entry name" value="CHD"/>
    <property type="match status" value="1"/>
</dbReference>
<dbReference type="CDD" id="cd06352">
    <property type="entry name" value="PBP1_NPR_GC-like"/>
    <property type="match status" value="1"/>
</dbReference>
<dbReference type="CDD" id="cd13992">
    <property type="entry name" value="PK_GC"/>
    <property type="match status" value="1"/>
</dbReference>
<dbReference type="FunFam" id="1.10.510.10:FF:001100">
    <property type="entry name" value="Guanylate cyclase"/>
    <property type="match status" value="1"/>
</dbReference>
<dbReference type="FunFam" id="3.30.70.1230:FF:000035">
    <property type="entry name" value="Guanylate cyclase"/>
    <property type="match status" value="1"/>
</dbReference>
<dbReference type="FunFam" id="3.40.50.2300:FF:000272">
    <property type="entry name" value="Guanylate cyclase"/>
    <property type="match status" value="1"/>
</dbReference>
<dbReference type="Gene3D" id="3.40.50.2300">
    <property type="match status" value="2"/>
</dbReference>
<dbReference type="Gene3D" id="3.30.70.1230">
    <property type="entry name" value="Nucleotide cyclase"/>
    <property type="match status" value="1"/>
</dbReference>
<dbReference type="Gene3D" id="1.10.510.10">
    <property type="entry name" value="Transferase(Phosphotransferase) domain 1"/>
    <property type="match status" value="1"/>
</dbReference>
<dbReference type="InterPro" id="IPR001054">
    <property type="entry name" value="A/G_cyclase"/>
</dbReference>
<dbReference type="InterPro" id="IPR018297">
    <property type="entry name" value="A/G_cyclase_CS"/>
</dbReference>
<dbReference type="InterPro" id="IPR001828">
    <property type="entry name" value="ANF_lig-bd_rcpt"/>
</dbReference>
<dbReference type="InterPro" id="IPR050401">
    <property type="entry name" value="Cyclic_nucleotide_synthase"/>
</dbReference>
<dbReference type="InterPro" id="IPR011009">
    <property type="entry name" value="Kinase-like_dom_sf"/>
</dbReference>
<dbReference type="InterPro" id="IPR029787">
    <property type="entry name" value="Nucleotide_cyclase"/>
</dbReference>
<dbReference type="InterPro" id="IPR028082">
    <property type="entry name" value="Peripla_BP_I"/>
</dbReference>
<dbReference type="InterPro" id="IPR000719">
    <property type="entry name" value="Prot_kinase_dom"/>
</dbReference>
<dbReference type="InterPro" id="IPR001245">
    <property type="entry name" value="Ser-Thr/Tyr_kinase_cat_dom"/>
</dbReference>
<dbReference type="PANTHER" id="PTHR11920">
    <property type="entry name" value="GUANYLYL CYCLASE"/>
    <property type="match status" value="1"/>
</dbReference>
<dbReference type="PANTHER" id="PTHR11920:SF260">
    <property type="entry name" value="RECEPTOR-TYPE GUANYLATE CYCLASE GCY-23"/>
    <property type="match status" value="1"/>
</dbReference>
<dbReference type="Pfam" id="PF01094">
    <property type="entry name" value="ANF_receptor"/>
    <property type="match status" value="1"/>
</dbReference>
<dbReference type="Pfam" id="PF00211">
    <property type="entry name" value="Guanylate_cyc"/>
    <property type="match status" value="1"/>
</dbReference>
<dbReference type="Pfam" id="PF07714">
    <property type="entry name" value="PK_Tyr_Ser-Thr"/>
    <property type="match status" value="1"/>
</dbReference>
<dbReference type="SMART" id="SM00044">
    <property type="entry name" value="CYCc"/>
    <property type="match status" value="1"/>
</dbReference>
<dbReference type="SUPFAM" id="SSF55073">
    <property type="entry name" value="Nucleotide cyclase"/>
    <property type="match status" value="1"/>
</dbReference>
<dbReference type="SUPFAM" id="SSF53822">
    <property type="entry name" value="Periplasmic binding protein-like I"/>
    <property type="match status" value="1"/>
</dbReference>
<dbReference type="SUPFAM" id="SSF56112">
    <property type="entry name" value="Protein kinase-like (PK-like)"/>
    <property type="match status" value="1"/>
</dbReference>
<dbReference type="PROSITE" id="PS00452">
    <property type="entry name" value="GUANYLATE_CYCLASE_1"/>
    <property type="match status" value="1"/>
</dbReference>
<dbReference type="PROSITE" id="PS50125">
    <property type="entry name" value="GUANYLATE_CYCLASE_2"/>
    <property type="match status" value="1"/>
</dbReference>
<dbReference type="PROSITE" id="PS50011">
    <property type="entry name" value="PROTEIN_KINASE_DOM"/>
    <property type="match status" value="1"/>
</dbReference>
<gene>
    <name evidence="10" type="primary">gcy-23</name>
    <name evidence="10" type="ORF">T26C12.4</name>
</gene>
<sequence>MRRELFIFLLLLGECANVKVKVGHIGAVGSMRNAEKILQLSKEQLTQEGVLGNDFDIEILNQMGCGESYEGVAVGADMYHVQGVRAFIGPYCNAELDAVAKMATFWNIPVVGYMASSNSFADKTIFKTLARVSLRTTNSLAEAAAALIKHYGWNKVAIATNTGAVAFERVQSFEEVFHQRGINVVRKIMLEEYTNAKAIMNSGLLQELENSARVVVCAFSSTRDMNKEFMQAVTLSGMNNANYAWILPWLQLETKDMAPWLGENGEYQQNVKDHFANSFIIDDVNGFDNTLVTPFKERLEASGYSTDDLEMKNIYGYIHLYDALRLYALAVRATMNETGNENSYLNGKEVWNHMRRITFPGLVSNAGVTSGTVMMDDIAERAPVYAAFYVPPNSDTVRKVCELEPVMLTNCDGTKTGNGCYELQVTDLSTGFWPSIDGSLPADEPACGFRNEKCDYTTLIIGGCIVLLIILLIICFFILSRVCENRALANTPWRIYRDDFRTIQENEMKSMLSIGSSKTKMSNMSMFVKHHAVVGTNTHASFHLYPQRRPIVFNRQDLQLLNQMKQAVHDNLNPFLGMSFNEKEEMVVLWKFCSRGTIQDMIYNQEVSLDSKFHGAFIRDITLGLEYLHSSIIGYHGSLTPWSCLIDRNWMIKLTDYGIANPLERWEKLGLISTETLKEGDDKSGSAQKTSLLYQPPEMLKNKESNRTRRMDQSWVKQSQARRQMGDIYAFGMVMHEILFRALPFPNGTNVSEVMDYIRDGTKTFRPTVHDRTQIHPDLVALLLDCWNENPEVRPSIRRVRLNTENYLKVKGSLVDQMMRMMEQYANNLEKLVAERTGMLEEANVRADKLLGQLLPKYVANELKMGRSVPAKTFDMATVMFSDIVGFTTICSSSTPLEVVSMLNSIYSKFDDAINKHGSYKVETIGDAYMIVSGIPEENGNEHIRNICNTALELMLLLKTYEIPHRRNVKLRIRLGIHTGTVAAGVVGLTAPRYCLFGDTVNVASRMESTSEPEKIQMSQEARDFCVRYYSEFQITLRGTVEAKGKGPVTSYWLLGKQSESQMQQQNFSQLGI</sequence>
<keyword id="KW-1003">Cell membrane</keyword>
<keyword id="KW-0966">Cell projection</keyword>
<keyword id="KW-0141">cGMP biosynthesis</keyword>
<keyword id="KW-0175">Coiled coil</keyword>
<keyword id="KW-0325">Glycoprotein</keyword>
<keyword id="KW-0342">GTP-binding</keyword>
<keyword id="KW-0456">Lyase</keyword>
<keyword id="KW-0460">Magnesium</keyword>
<keyword id="KW-0472">Membrane</keyword>
<keyword id="KW-0479">Metal-binding</keyword>
<keyword id="KW-0547">Nucleotide-binding</keyword>
<keyword id="KW-0675">Receptor</keyword>
<keyword id="KW-1185">Reference proteome</keyword>
<keyword id="KW-0732">Signal</keyword>
<keyword id="KW-0812">Transmembrane</keyword>
<keyword id="KW-1133">Transmembrane helix</keyword>
<proteinExistence type="evidence at transcript level"/>
<reference evidence="8" key="1">
    <citation type="journal article" date="2006" name="Genetics">
        <title>Identification of guanylyl cyclases that function in thermosensory neurons of Caenorhabditis elegans.</title>
        <authorList>
            <person name="Inada H."/>
            <person name="Ito H."/>
            <person name="Satterlee J."/>
            <person name="Sengupta P."/>
            <person name="Matsumoto K."/>
            <person name="Mori I."/>
        </authorList>
    </citation>
    <scope>NUCLEOTIDE SEQUENCE [MRNA]</scope>
    <scope>FUNCTION</scope>
    <scope>SUBCELLULAR LOCATION</scope>
    <scope>TISSUE SPECIFICITY</scope>
</reference>
<reference evidence="9" key="2">
    <citation type="journal article" date="1998" name="Science">
        <title>Genome sequence of the nematode C. elegans: a platform for investigating biology.</title>
        <authorList>
            <consortium name="The C. elegans sequencing consortium"/>
        </authorList>
    </citation>
    <scope>NUCLEOTIDE SEQUENCE [LARGE SCALE GENOMIC DNA]</scope>
    <source>
        <strain evidence="9">Bristol N2</strain>
    </source>
</reference>
<name>GCY23_CAEEL</name>
<protein>
    <recommendedName>
        <fullName evidence="7">Receptor-type guanylate cyclase gcy-23</fullName>
        <ecNumber evidence="1">4.6.1.2</ecNumber>
    </recommendedName>
</protein>